<reference key="1">
    <citation type="journal article" date="2011" name="PLoS Genet.">
        <title>The evolution of host specialization in the vertebrate gut symbiont Lactobacillus reuteri.</title>
        <authorList>
            <person name="Frese S.A."/>
            <person name="Benson A.K."/>
            <person name="Tannock G.W."/>
            <person name="Loach D.M."/>
            <person name="Kim J."/>
            <person name="Zhang M."/>
            <person name="Oh P.L."/>
            <person name="Heng N.C."/>
            <person name="Patil P.B."/>
            <person name="Juge N."/>
            <person name="Mackenzie D.A."/>
            <person name="Pearson B.M."/>
            <person name="Lapidus A."/>
            <person name="Dalin E."/>
            <person name="Tice H."/>
            <person name="Goltsman E."/>
            <person name="Land M."/>
            <person name="Hauser L."/>
            <person name="Ivanova N."/>
            <person name="Kyrpides N.C."/>
            <person name="Walter J."/>
        </authorList>
    </citation>
    <scope>NUCLEOTIDE SEQUENCE [LARGE SCALE GENOMIC DNA]</scope>
    <source>
        <strain>DSM 20016</strain>
    </source>
</reference>
<name>CH10_LIMRD</name>
<evidence type="ECO:0000255" key="1">
    <source>
        <dbReference type="HAMAP-Rule" id="MF_00580"/>
    </source>
</evidence>
<feature type="chain" id="PRO_1000061190" description="Co-chaperonin GroES">
    <location>
        <begin position="1"/>
        <end position="94"/>
    </location>
</feature>
<proteinExistence type="inferred from homology"/>
<comment type="function">
    <text evidence="1">Together with the chaperonin GroEL, plays an essential role in assisting protein folding. The GroEL-GroES system forms a nano-cage that allows encapsulation of the non-native substrate proteins and provides a physical environment optimized to promote and accelerate protein folding. GroES binds to the apical surface of the GroEL ring, thereby capping the opening of the GroEL channel.</text>
</comment>
<comment type="subunit">
    <text evidence="1">Heptamer of 7 subunits arranged in a ring. Interacts with the chaperonin GroEL.</text>
</comment>
<comment type="subcellular location">
    <subcellularLocation>
        <location evidence="1">Cytoplasm</location>
    </subcellularLocation>
</comment>
<comment type="similarity">
    <text evidence="1">Belongs to the GroES chaperonin family.</text>
</comment>
<gene>
    <name evidence="1" type="primary">groES</name>
    <name evidence="1" type="synonym">groS</name>
    <name type="ordered locus">Lreu_0353</name>
</gene>
<accession>A5VIE8</accession>
<protein>
    <recommendedName>
        <fullName evidence="1">Co-chaperonin GroES</fullName>
    </recommendedName>
    <alternativeName>
        <fullName evidence="1">10 kDa chaperonin</fullName>
    </alternativeName>
    <alternativeName>
        <fullName evidence="1">Chaperonin-10</fullName>
        <shortName evidence="1">Cpn10</shortName>
    </alternativeName>
</protein>
<keyword id="KW-0143">Chaperone</keyword>
<keyword id="KW-0963">Cytoplasm</keyword>
<keyword id="KW-1185">Reference proteome</keyword>
<sequence>MLKPLGDRVVLKAETEEEKTVGGIVLASNVKEKPTTGKVIAVGEGRTLENGQKLAPAVKEGDRVLFDKYAGNEVEYNGEKFLVVHAKDLVAIVE</sequence>
<dbReference type="EMBL" id="CP000705">
    <property type="protein sequence ID" value="ABQ82622.1"/>
    <property type="molecule type" value="Genomic_DNA"/>
</dbReference>
<dbReference type="RefSeq" id="WP_003666368.1">
    <property type="nucleotide sequence ID" value="NZ_AZDD01000014.1"/>
</dbReference>
<dbReference type="SMR" id="A5VIE8"/>
<dbReference type="STRING" id="557436.Lreu_0353"/>
<dbReference type="GeneID" id="77190156"/>
<dbReference type="KEGG" id="lre:Lreu_0353"/>
<dbReference type="PATRIC" id="fig|557436.17.peg.393"/>
<dbReference type="eggNOG" id="COG0234">
    <property type="taxonomic scope" value="Bacteria"/>
</dbReference>
<dbReference type="HOGENOM" id="CLU_132825_2_1_9"/>
<dbReference type="Proteomes" id="UP000001991">
    <property type="component" value="Chromosome"/>
</dbReference>
<dbReference type="GO" id="GO:0005737">
    <property type="term" value="C:cytoplasm"/>
    <property type="evidence" value="ECO:0007669"/>
    <property type="project" value="UniProtKB-SubCell"/>
</dbReference>
<dbReference type="GO" id="GO:0005524">
    <property type="term" value="F:ATP binding"/>
    <property type="evidence" value="ECO:0007669"/>
    <property type="project" value="InterPro"/>
</dbReference>
<dbReference type="GO" id="GO:0046872">
    <property type="term" value="F:metal ion binding"/>
    <property type="evidence" value="ECO:0007669"/>
    <property type="project" value="TreeGrafter"/>
</dbReference>
<dbReference type="GO" id="GO:0044183">
    <property type="term" value="F:protein folding chaperone"/>
    <property type="evidence" value="ECO:0007669"/>
    <property type="project" value="InterPro"/>
</dbReference>
<dbReference type="GO" id="GO:0051087">
    <property type="term" value="F:protein-folding chaperone binding"/>
    <property type="evidence" value="ECO:0007669"/>
    <property type="project" value="TreeGrafter"/>
</dbReference>
<dbReference type="GO" id="GO:0051082">
    <property type="term" value="F:unfolded protein binding"/>
    <property type="evidence" value="ECO:0007669"/>
    <property type="project" value="TreeGrafter"/>
</dbReference>
<dbReference type="GO" id="GO:0051085">
    <property type="term" value="P:chaperone cofactor-dependent protein refolding"/>
    <property type="evidence" value="ECO:0007669"/>
    <property type="project" value="TreeGrafter"/>
</dbReference>
<dbReference type="CDD" id="cd00320">
    <property type="entry name" value="cpn10"/>
    <property type="match status" value="1"/>
</dbReference>
<dbReference type="FunFam" id="2.30.33.40:FF:000001">
    <property type="entry name" value="10 kDa chaperonin"/>
    <property type="match status" value="1"/>
</dbReference>
<dbReference type="Gene3D" id="2.30.33.40">
    <property type="entry name" value="GroES chaperonin"/>
    <property type="match status" value="1"/>
</dbReference>
<dbReference type="HAMAP" id="MF_00580">
    <property type="entry name" value="CH10"/>
    <property type="match status" value="1"/>
</dbReference>
<dbReference type="InterPro" id="IPR020818">
    <property type="entry name" value="Chaperonin_GroES"/>
</dbReference>
<dbReference type="InterPro" id="IPR037124">
    <property type="entry name" value="Chaperonin_GroES_sf"/>
</dbReference>
<dbReference type="InterPro" id="IPR018369">
    <property type="entry name" value="Chaprnonin_Cpn10_CS"/>
</dbReference>
<dbReference type="InterPro" id="IPR011032">
    <property type="entry name" value="GroES-like_sf"/>
</dbReference>
<dbReference type="NCBIfam" id="NF001531">
    <property type="entry name" value="PRK00364.2-2"/>
    <property type="match status" value="1"/>
</dbReference>
<dbReference type="NCBIfam" id="NF001533">
    <property type="entry name" value="PRK00364.2-4"/>
    <property type="match status" value="1"/>
</dbReference>
<dbReference type="NCBIfam" id="NF001534">
    <property type="entry name" value="PRK00364.2-5"/>
    <property type="match status" value="1"/>
</dbReference>
<dbReference type="PANTHER" id="PTHR10772">
    <property type="entry name" value="10 KDA HEAT SHOCK PROTEIN"/>
    <property type="match status" value="1"/>
</dbReference>
<dbReference type="PANTHER" id="PTHR10772:SF58">
    <property type="entry name" value="CO-CHAPERONIN GROES"/>
    <property type="match status" value="1"/>
</dbReference>
<dbReference type="Pfam" id="PF00166">
    <property type="entry name" value="Cpn10"/>
    <property type="match status" value="1"/>
</dbReference>
<dbReference type="PRINTS" id="PR00297">
    <property type="entry name" value="CHAPERONIN10"/>
</dbReference>
<dbReference type="SMART" id="SM00883">
    <property type="entry name" value="Cpn10"/>
    <property type="match status" value="1"/>
</dbReference>
<dbReference type="SUPFAM" id="SSF50129">
    <property type="entry name" value="GroES-like"/>
    <property type="match status" value="1"/>
</dbReference>
<dbReference type="PROSITE" id="PS00681">
    <property type="entry name" value="CHAPERONINS_CPN10"/>
    <property type="match status" value="1"/>
</dbReference>
<organism>
    <name type="scientific">Limosilactobacillus reuteri (strain DSM 20016)</name>
    <name type="common">Lactobacillus reuteri</name>
    <dbReference type="NCBI Taxonomy" id="557436"/>
    <lineage>
        <taxon>Bacteria</taxon>
        <taxon>Bacillati</taxon>
        <taxon>Bacillota</taxon>
        <taxon>Bacilli</taxon>
        <taxon>Lactobacillales</taxon>
        <taxon>Lactobacillaceae</taxon>
        <taxon>Limosilactobacillus</taxon>
    </lineage>
</organism>